<feature type="chain" id="PRO_0000344705" description="Large ribosomal subunit protein bL36A">
    <location>
        <begin position="1"/>
        <end position="38"/>
    </location>
</feature>
<evidence type="ECO:0000255" key="1">
    <source>
        <dbReference type="HAMAP-Rule" id="MF_00251"/>
    </source>
</evidence>
<evidence type="ECO:0000305" key="2"/>
<accession>Q02T59</accession>
<protein>
    <recommendedName>
        <fullName evidence="1">Large ribosomal subunit protein bL36A</fullName>
    </recommendedName>
    <alternativeName>
        <fullName evidence="2">50S ribosomal protein L36 1</fullName>
    </alternativeName>
</protein>
<sequence length="38" mass="4434">MKVRASVKKLCRNCKIIRRDGIVRVICSAEPRHKQRQG</sequence>
<dbReference type="EMBL" id="CP000438">
    <property type="protein sequence ID" value="ABJ13513.1"/>
    <property type="molecule type" value="Genomic_DNA"/>
</dbReference>
<dbReference type="SMR" id="Q02T59"/>
<dbReference type="KEGG" id="pau:PA14_09070"/>
<dbReference type="PseudoCAP" id="PA14_09070"/>
<dbReference type="HOGENOM" id="CLU_135723_6_2_6"/>
<dbReference type="BioCyc" id="PAER208963:G1G74-757-MONOMER"/>
<dbReference type="Proteomes" id="UP000000653">
    <property type="component" value="Chromosome"/>
</dbReference>
<dbReference type="GO" id="GO:0005737">
    <property type="term" value="C:cytoplasm"/>
    <property type="evidence" value="ECO:0007669"/>
    <property type="project" value="UniProtKB-ARBA"/>
</dbReference>
<dbReference type="GO" id="GO:1990904">
    <property type="term" value="C:ribonucleoprotein complex"/>
    <property type="evidence" value="ECO:0007669"/>
    <property type="project" value="UniProtKB-KW"/>
</dbReference>
<dbReference type="GO" id="GO:0005840">
    <property type="term" value="C:ribosome"/>
    <property type="evidence" value="ECO:0007669"/>
    <property type="project" value="UniProtKB-KW"/>
</dbReference>
<dbReference type="GO" id="GO:0003735">
    <property type="term" value="F:structural constituent of ribosome"/>
    <property type="evidence" value="ECO:0007669"/>
    <property type="project" value="InterPro"/>
</dbReference>
<dbReference type="GO" id="GO:0006412">
    <property type="term" value="P:translation"/>
    <property type="evidence" value="ECO:0007669"/>
    <property type="project" value="UniProtKB-UniRule"/>
</dbReference>
<dbReference type="HAMAP" id="MF_00251">
    <property type="entry name" value="Ribosomal_bL36"/>
    <property type="match status" value="1"/>
</dbReference>
<dbReference type="InterPro" id="IPR000473">
    <property type="entry name" value="Ribosomal_bL36"/>
</dbReference>
<dbReference type="InterPro" id="IPR035977">
    <property type="entry name" value="Ribosomal_bL36_sp"/>
</dbReference>
<dbReference type="NCBIfam" id="TIGR01022">
    <property type="entry name" value="rpmJ_bact"/>
    <property type="match status" value="1"/>
</dbReference>
<dbReference type="PANTHER" id="PTHR42888">
    <property type="entry name" value="50S RIBOSOMAL PROTEIN L36, CHLOROPLASTIC"/>
    <property type="match status" value="1"/>
</dbReference>
<dbReference type="PANTHER" id="PTHR42888:SF1">
    <property type="entry name" value="LARGE RIBOSOMAL SUBUNIT PROTEIN BL36C"/>
    <property type="match status" value="1"/>
</dbReference>
<dbReference type="Pfam" id="PF00444">
    <property type="entry name" value="Ribosomal_L36"/>
    <property type="match status" value="1"/>
</dbReference>
<dbReference type="SUPFAM" id="SSF57840">
    <property type="entry name" value="Ribosomal protein L36"/>
    <property type="match status" value="1"/>
</dbReference>
<dbReference type="PROSITE" id="PS00828">
    <property type="entry name" value="RIBOSOMAL_L36"/>
    <property type="match status" value="1"/>
</dbReference>
<organism>
    <name type="scientific">Pseudomonas aeruginosa (strain UCBPP-PA14)</name>
    <dbReference type="NCBI Taxonomy" id="208963"/>
    <lineage>
        <taxon>Bacteria</taxon>
        <taxon>Pseudomonadati</taxon>
        <taxon>Pseudomonadota</taxon>
        <taxon>Gammaproteobacteria</taxon>
        <taxon>Pseudomonadales</taxon>
        <taxon>Pseudomonadaceae</taxon>
        <taxon>Pseudomonas</taxon>
    </lineage>
</organism>
<name>RL361_PSEAB</name>
<proteinExistence type="inferred from homology"/>
<keyword id="KW-0687">Ribonucleoprotein</keyword>
<keyword id="KW-0689">Ribosomal protein</keyword>
<gene>
    <name evidence="1" type="primary">rpmJ1</name>
    <name type="ordered locus">PA14_09070</name>
</gene>
<comment type="similarity">
    <text evidence="1">Belongs to the bacterial ribosomal protein bL36 family.</text>
</comment>
<reference key="1">
    <citation type="journal article" date="2006" name="Genome Biol.">
        <title>Genomic analysis reveals that Pseudomonas aeruginosa virulence is combinatorial.</title>
        <authorList>
            <person name="Lee D.G."/>
            <person name="Urbach J.M."/>
            <person name="Wu G."/>
            <person name="Liberati N.T."/>
            <person name="Feinbaum R.L."/>
            <person name="Miyata S."/>
            <person name="Diggins L.T."/>
            <person name="He J."/>
            <person name="Saucier M."/>
            <person name="Deziel E."/>
            <person name="Friedman L."/>
            <person name="Li L."/>
            <person name="Grills G."/>
            <person name="Montgomery K."/>
            <person name="Kucherlapati R."/>
            <person name="Rahme L.G."/>
            <person name="Ausubel F.M."/>
        </authorList>
    </citation>
    <scope>NUCLEOTIDE SEQUENCE [LARGE SCALE GENOMIC DNA]</scope>
    <source>
        <strain>UCBPP-PA14</strain>
    </source>
</reference>